<evidence type="ECO:0000250" key="1"/>
<evidence type="ECO:0000305" key="2"/>
<proteinExistence type="inferred from homology"/>
<dbReference type="EC" id="4.1.3.17"/>
<dbReference type="EC" id="4.1.1.112"/>
<dbReference type="EMBL" id="AE015451">
    <property type="protein sequence ID" value="AAN67698.1"/>
    <property type="molecule type" value="Genomic_DNA"/>
</dbReference>
<dbReference type="RefSeq" id="NP_744234.1">
    <property type="nucleotide sequence ID" value="NC_002947.4"/>
</dbReference>
<dbReference type="SMR" id="Q88L51"/>
<dbReference type="STRING" id="160488.PP_2084"/>
<dbReference type="PaxDb" id="160488-PP_2084"/>
<dbReference type="KEGG" id="ppu:PP_2084"/>
<dbReference type="PATRIC" id="fig|160488.4.peg.2198"/>
<dbReference type="eggNOG" id="COG0684">
    <property type="taxonomic scope" value="Bacteria"/>
</dbReference>
<dbReference type="HOGENOM" id="CLU_072626_4_0_6"/>
<dbReference type="OrthoDB" id="943692at2"/>
<dbReference type="PhylomeDB" id="Q88L51"/>
<dbReference type="BioCyc" id="PPUT160488:G1G01-2222-MONOMER"/>
<dbReference type="Proteomes" id="UP000000556">
    <property type="component" value="Chromosome"/>
</dbReference>
<dbReference type="GO" id="GO:0047443">
    <property type="term" value="F:4-hydroxy-4-methyl-2-oxoglutarate aldolase activity"/>
    <property type="evidence" value="ECO:0007669"/>
    <property type="project" value="UniProtKB-EC"/>
</dbReference>
<dbReference type="GO" id="GO:0046872">
    <property type="term" value="F:metal ion binding"/>
    <property type="evidence" value="ECO:0007669"/>
    <property type="project" value="UniProtKB-KW"/>
</dbReference>
<dbReference type="GO" id="GO:0008948">
    <property type="term" value="F:oxaloacetate decarboxylase activity"/>
    <property type="evidence" value="ECO:0007669"/>
    <property type="project" value="UniProtKB-EC"/>
</dbReference>
<dbReference type="GO" id="GO:0008428">
    <property type="term" value="F:ribonuclease inhibitor activity"/>
    <property type="evidence" value="ECO:0007669"/>
    <property type="project" value="InterPro"/>
</dbReference>
<dbReference type="GO" id="GO:0051252">
    <property type="term" value="P:regulation of RNA metabolic process"/>
    <property type="evidence" value="ECO:0007669"/>
    <property type="project" value="InterPro"/>
</dbReference>
<dbReference type="CDD" id="cd16841">
    <property type="entry name" value="RraA_family"/>
    <property type="match status" value="1"/>
</dbReference>
<dbReference type="Gene3D" id="3.50.30.40">
    <property type="entry name" value="Ribonuclease E inhibitor RraA/RraA-like"/>
    <property type="match status" value="1"/>
</dbReference>
<dbReference type="InterPro" id="IPR010203">
    <property type="entry name" value="RraA"/>
</dbReference>
<dbReference type="InterPro" id="IPR005493">
    <property type="entry name" value="RraA/RraA-like"/>
</dbReference>
<dbReference type="InterPro" id="IPR036704">
    <property type="entry name" value="RraA/RraA-like_sf"/>
</dbReference>
<dbReference type="NCBIfam" id="TIGR01935">
    <property type="entry name" value="NOT-MenG"/>
    <property type="match status" value="1"/>
</dbReference>
<dbReference type="NCBIfam" id="NF006875">
    <property type="entry name" value="PRK09372.1"/>
    <property type="match status" value="1"/>
</dbReference>
<dbReference type="NCBIfam" id="NF009134">
    <property type="entry name" value="PRK12487.1"/>
    <property type="match status" value="1"/>
</dbReference>
<dbReference type="PANTHER" id="PTHR33254">
    <property type="entry name" value="4-HYDROXY-4-METHYL-2-OXOGLUTARATE ALDOLASE 3-RELATED"/>
    <property type="match status" value="1"/>
</dbReference>
<dbReference type="PANTHER" id="PTHR33254:SF29">
    <property type="entry name" value="REGULATOR OF RIBONUCLEASE ACTIVITY A"/>
    <property type="match status" value="1"/>
</dbReference>
<dbReference type="Pfam" id="PF03737">
    <property type="entry name" value="RraA-like"/>
    <property type="match status" value="1"/>
</dbReference>
<dbReference type="SUPFAM" id="SSF89562">
    <property type="entry name" value="RraA-like"/>
    <property type="match status" value="1"/>
</dbReference>
<comment type="function">
    <text evidence="1">Catalyzes the aldol cleavage of 4-hydroxy-4-methyl-2-oxoglutarate (HMG) into 2 molecules of pyruvate. Also contains a secondary oxaloacetate (OAA) decarboxylase activity due to the common pyruvate enolate transition state formed following C-C bond cleavage in the retro-aldol and decarboxylation reactions (By similarity).</text>
</comment>
<comment type="catalytic activity">
    <reaction>
        <text>4-hydroxy-4-methyl-2-oxoglutarate = 2 pyruvate</text>
        <dbReference type="Rhea" id="RHEA:22748"/>
        <dbReference type="ChEBI" id="CHEBI:15361"/>
        <dbReference type="ChEBI" id="CHEBI:58276"/>
        <dbReference type="EC" id="4.1.3.17"/>
    </reaction>
</comment>
<comment type="catalytic activity">
    <reaction>
        <text>oxaloacetate + H(+) = pyruvate + CO2</text>
        <dbReference type="Rhea" id="RHEA:15641"/>
        <dbReference type="ChEBI" id="CHEBI:15361"/>
        <dbReference type="ChEBI" id="CHEBI:15378"/>
        <dbReference type="ChEBI" id="CHEBI:16452"/>
        <dbReference type="ChEBI" id="CHEBI:16526"/>
        <dbReference type="EC" id="4.1.1.112"/>
    </reaction>
</comment>
<comment type="cofactor">
    <cofactor evidence="1">
        <name>a divalent metal cation</name>
        <dbReference type="ChEBI" id="CHEBI:60240"/>
    </cofactor>
    <text evidence="1">Divalent metal cation.</text>
</comment>
<comment type="subunit">
    <text evidence="1">Homotrimer.</text>
</comment>
<comment type="similarity">
    <text evidence="2">Belongs to the class II aldolase/RraA-like family.</text>
</comment>
<keyword id="KW-0456">Lyase</keyword>
<keyword id="KW-0479">Metal-binding</keyword>
<keyword id="KW-1185">Reference proteome</keyword>
<organism>
    <name type="scientific">Pseudomonas putida (strain ATCC 47054 / DSM 6125 / CFBP 8728 / NCIMB 11950 / KT2440)</name>
    <dbReference type="NCBI Taxonomy" id="160488"/>
    <lineage>
        <taxon>Bacteria</taxon>
        <taxon>Pseudomonadati</taxon>
        <taxon>Pseudomonadota</taxon>
        <taxon>Gammaproteobacteria</taxon>
        <taxon>Pseudomonadales</taxon>
        <taxon>Pseudomonadaceae</taxon>
        <taxon>Pseudomonas</taxon>
    </lineage>
</organism>
<reference key="1">
    <citation type="journal article" date="2002" name="Environ. Microbiol.">
        <title>Complete genome sequence and comparative analysis of the metabolically versatile Pseudomonas putida KT2440.</title>
        <authorList>
            <person name="Nelson K.E."/>
            <person name="Weinel C."/>
            <person name="Paulsen I.T."/>
            <person name="Dodson R.J."/>
            <person name="Hilbert H."/>
            <person name="Martins dos Santos V.A.P."/>
            <person name="Fouts D.E."/>
            <person name="Gill S.R."/>
            <person name="Pop M."/>
            <person name="Holmes M."/>
            <person name="Brinkac L.M."/>
            <person name="Beanan M.J."/>
            <person name="DeBoy R.T."/>
            <person name="Daugherty S.C."/>
            <person name="Kolonay J.F."/>
            <person name="Madupu R."/>
            <person name="Nelson W.C."/>
            <person name="White O."/>
            <person name="Peterson J.D."/>
            <person name="Khouri H.M."/>
            <person name="Hance I."/>
            <person name="Chris Lee P."/>
            <person name="Holtzapple E.K."/>
            <person name="Scanlan D."/>
            <person name="Tran K."/>
            <person name="Moazzez A."/>
            <person name="Utterback T.R."/>
            <person name="Rizzo M."/>
            <person name="Lee K."/>
            <person name="Kosack D."/>
            <person name="Moestl D."/>
            <person name="Wedler H."/>
            <person name="Lauber J."/>
            <person name="Stjepandic D."/>
            <person name="Hoheisel J."/>
            <person name="Straetz M."/>
            <person name="Heim S."/>
            <person name="Kiewitz C."/>
            <person name="Eisen J.A."/>
            <person name="Timmis K.N."/>
            <person name="Duesterhoeft A."/>
            <person name="Tuemmler B."/>
            <person name="Fraser C.M."/>
        </authorList>
    </citation>
    <scope>NUCLEOTIDE SEQUENCE [LARGE SCALE GENOMIC DNA]</scope>
    <source>
        <strain>ATCC 47054 / DSM 6125 / CFBP 8728 / NCIMB 11950 / KT2440</strain>
    </source>
</reference>
<accession>Q88L51</accession>
<gene>
    <name type="ordered locus">PP_2084</name>
</gene>
<name>RRAAH_PSEPK</name>
<sequence length="163" mass="17646">MQHYVTPDLCDAYPDLVQVLEPMFSNFGGRDSFGGQIVTIKCFEDNSLVKEQVELDGKGKVLVVDGGGSLRRALLGDMLAEKAAKNGWEGLVIYGCVRDVDVLIQTDVGVQALASHPMKTDKRGIGDLNVVVTFAGVTFRPGEYVYADNNGVLVSPKPLKMPE</sequence>
<protein>
    <recommendedName>
        <fullName>Putative 4-hydroxy-4-methyl-2-oxoglutarate aldolase</fullName>
        <shortName>HMG aldolase</shortName>
        <ecNumber>4.1.3.17</ecNumber>
    </recommendedName>
    <alternativeName>
        <fullName>Oxaloacetate decarboxylase</fullName>
        <shortName>OAA decarboxylase</shortName>
        <ecNumber>4.1.1.112</ecNumber>
    </alternativeName>
    <alternativeName>
        <fullName>Regulator of ribonuclease activity homolog</fullName>
    </alternativeName>
    <alternativeName>
        <fullName>RraA-like protein</fullName>
    </alternativeName>
</protein>
<feature type="chain" id="PRO_0000209631" description="Putative 4-hydroxy-4-methyl-2-oxoglutarate aldolase">
    <location>
        <begin position="1"/>
        <end position="163"/>
    </location>
</feature>
<feature type="binding site" evidence="1">
    <location>
        <begin position="76"/>
        <end position="79"/>
    </location>
    <ligand>
        <name>substrate</name>
    </ligand>
</feature>
<feature type="binding site" evidence="1">
    <location>
        <position position="98"/>
    </location>
    <ligand>
        <name>substrate</name>
    </ligand>
</feature>
<feature type="binding site" evidence="1">
    <location>
        <position position="99"/>
    </location>
    <ligand>
        <name>a divalent metal cation</name>
        <dbReference type="ChEBI" id="CHEBI:60240"/>
    </ligand>
</feature>